<comment type="function">
    <text evidence="1">Responsible for the transport of dicarboxylates such as succinate, fumarate, and malate from the periplasm across the membrane. This transport system plays an important role in the energy supply of rhizobium-legume symbionts (By similarity).</text>
</comment>
<comment type="subcellular location">
    <subcellularLocation>
        <location evidence="1">Cell inner membrane</location>
        <topology evidence="1">Multi-pass membrane protein</topology>
    </subcellularLocation>
</comment>
<comment type="similarity">
    <text evidence="4">Belongs to the dicarboxylate/amino acid:cation symporter (DAACS) (TC 2.A.23) family.</text>
</comment>
<comment type="sequence caution" evidence="4">
    <conflict type="erroneous initiation">
        <sequence resource="EMBL-CDS" id="BAB52220"/>
    </conflict>
</comment>
<reference key="1">
    <citation type="journal article" date="2000" name="DNA Res.">
        <title>Complete genome structure of the nitrogen-fixing symbiotic bacterium Mesorhizobium loti.</title>
        <authorList>
            <person name="Kaneko T."/>
            <person name="Nakamura Y."/>
            <person name="Sato S."/>
            <person name="Asamizu E."/>
            <person name="Kato T."/>
            <person name="Sasamoto S."/>
            <person name="Watanabe A."/>
            <person name="Idesawa K."/>
            <person name="Ishikawa A."/>
            <person name="Kawashima K."/>
            <person name="Kimura T."/>
            <person name="Kishida Y."/>
            <person name="Kiyokawa C."/>
            <person name="Kohara M."/>
            <person name="Matsumoto M."/>
            <person name="Matsuno A."/>
            <person name="Mochizuki Y."/>
            <person name="Nakayama S."/>
            <person name="Nakazaki N."/>
            <person name="Shimpo S."/>
            <person name="Sugimoto M."/>
            <person name="Takeuchi C."/>
            <person name="Yamada M."/>
            <person name="Tabata S."/>
        </authorList>
    </citation>
    <scope>NUCLEOTIDE SEQUENCE [LARGE SCALE GENOMIC DNA]</scope>
    <source>
        <strain>LMG 29417 / CECT 9101 / MAFF 303099</strain>
    </source>
</reference>
<organism>
    <name type="scientific">Mesorhizobium japonicum (strain LMG 29417 / CECT 9101 / MAFF 303099)</name>
    <name type="common">Mesorhizobium loti (strain MAFF 303099)</name>
    <dbReference type="NCBI Taxonomy" id="266835"/>
    <lineage>
        <taxon>Bacteria</taxon>
        <taxon>Pseudomonadati</taxon>
        <taxon>Pseudomonadota</taxon>
        <taxon>Alphaproteobacteria</taxon>
        <taxon>Hyphomicrobiales</taxon>
        <taxon>Phyllobacteriaceae</taxon>
        <taxon>Mesorhizobium</taxon>
    </lineage>
</organism>
<keyword id="KW-0997">Cell inner membrane</keyword>
<keyword id="KW-1003">Cell membrane</keyword>
<keyword id="KW-0472">Membrane</keyword>
<keyword id="KW-0769">Symport</keyword>
<keyword id="KW-0812">Transmembrane</keyword>
<keyword id="KW-1133">Transmembrane helix</keyword>
<keyword id="KW-0813">Transport</keyword>
<gene>
    <name type="primary">dctA1</name>
    <name type="ordered locus">mll5840</name>
</gene>
<feature type="chain" id="PRO_0000202107" description="C4-dicarboxylate transport protein 1">
    <location>
        <begin position="1"/>
        <end position="477"/>
    </location>
</feature>
<feature type="transmembrane region" description="Helical" evidence="2">
    <location>
        <begin position="21"/>
        <end position="39"/>
    </location>
</feature>
<feature type="transmembrane region" description="Helical" evidence="2">
    <location>
        <begin position="59"/>
        <end position="76"/>
    </location>
</feature>
<feature type="transmembrane region" description="Helical" evidence="2">
    <location>
        <begin position="89"/>
        <end position="111"/>
    </location>
</feature>
<feature type="transmembrane region" description="Helical" evidence="2">
    <location>
        <begin position="162"/>
        <end position="179"/>
    </location>
</feature>
<feature type="transmembrane region" description="Helical" evidence="2">
    <location>
        <begin position="200"/>
        <end position="221"/>
    </location>
</feature>
<feature type="transmembrane region" description="Helical" evidence="2">
    <location>
        <begin position="231"/>
        <end position="253"/>
    </location>
</feature>
<feature type="transmembrane region" description="Helical" evidence="2">
    <location>
        <begin position="342"/>
        <end position="364"/>
    </location>
</feature>
<feature type="transmembrane region" description="Helical" evidence="2">
    <location>
        <begin position="368"/>
        <end position="387"/>
    </location>
</feature>
<feature type="region of interest" description="Disordered" evidence="3">
    <location>
        <begin position="435"/>
        <end position="477"/>
    </location>
</feature>
<dbReference type="EMBL" id="BA000012">
    <property type="protein sequence ID" value="BAB52220.1"/>
    <property type="status" value="ALT_INIT"/>
    <property type="molecule type" value="Genomic_DNA"/>
</dbReference>
<dbReference type="RefSeq" id="WP_010913554.1">
    <property type="nucleotide sequence ID" value="NC_002678.2"/>
</dbReference>
<dbReference type="SMR" id="Q98AV2"/>
<dbReference type="KEGG" id="mlo:mll5840"/>
<dbReference type="PATRIC" id="fig|266835.9.peg.4645"/>
<dbReference type="eggNOG" id="COG1301">
    <property type="taxonomic scope" value="Bacteria"/>
</dbReference>
<dbReference type="HOGENOM" id="CLU_019375_7_0_5"/>
<dbReference type="Proteomes" id="UP000000552">
    <property type="component" value="Chromosome"/>
</dbReference>
<dbReference type="GO" id="GO:0005886">
    <property type="term" value="C:plasma membrane"/>
    <property type="evidence" value="ECO:0007669"/>
    <property type="project" value="UniProtKB-SubCell"/>
</dbReference>
<dbReference type="GO" id="GO:0015138">
    <property type="term" value="F:fumarate transmembrane transporter activity"/>
    <property type="evidence" value="ECO:0007669"/>
    <property type="project" value="TreeGrafter"/>
</dbReference>
<dbReference type="GO" id="GO:0015366">
    <property type="term" value="F:malate:proton symporter activity"/>
    <property type="evidence" value="ECO:0007669"/>
    <property type="project" value="TreeGrafter"/>
</dbReference>
<dbReference type="GO" id="GO:0015141">
    <property type="term" value="F:succinate transmembrane transporter activity"/>
    <property type="evidence" value="ECO:0007669"/>
    <property type="project" value="TreeGrafter"/>
</dbReference>
<dbReference type="GO" id="GO:0070778">
    <property type="term" value="P:L-aspartate transmembrane transport"/>
    <property type="evidence" value="ECO:0007669"/>
    <property type="project" value="TreeGrafter"/>
</dbReference>
<dbReference type="FunFam" id="1.10.3860.10:FF:000001">
    <property type="entry name" value="C4-dicarboxylate transport protein"/>
    <property type="match status" value="1"/>
</dbReference>
<dbReference type="Gene3D" id="1.10.3860.10">
    <property type="entry name" value="Sodium:dicarboxylate symporter"/>
    <property type="match status" value="1"/>
</dbReference>
<dbReference type="HAMAP" id="MF_01300">
    <property type="entry name" value="C4_dicarb_transport"/>
    <property type="match status" value="1"/>
</dbReference>
<dbReference type="InterPro" id="IPR023954">
    <property type="entry name" value="C4_dicarb_transport"/>
</dbReference>
<dbReference type="InterPro" id="IPR001991">
    <property type="entry name" value="Na-dicarboxylate_symporter"/>
</dbReference>
<dbReference type="InterPro" id="IPR018107">
    <property type="entry name" value="Na-dicarboxylate_symporter_CS"/>
</dbReference>
<dbReference type="InterPro" id="IPR036458">
    <property type="entry name" value="Na:dicarbo_symporter_sf"/>
</dbReference>
<dbReference type="NCBIfam" id="NF002461">
    <property type="entry name" value="PRK01663.1"/>
    <property type="match status" value="1"/>
</dbReference>
<dbReference type="NCBIfam" id="NF009587">
    <property type="entry name" value="PRK13027.1"/>
    <property type="match status" value="1"/>
</dbReference>
<dbReference type="PANTHER" id="PTHR42865:SF1">
    <property type="entry name" value="AEROBIC C4-DICARBOXYLATE TRANSPORT PROTEIN"/>
    <property type="match status" value="1"/>
</dbReference>
<dbReference type="PANTHER" id="PTHR42865">
    <property type="entry name" value="PROTON/GLUTAMATE-ASPARTATE SYMPORTER"/>
    <property type="match status" value="1"/>
</dbReference>
<dbReference type="Pfam" id="PF00375">
    <property type="entry name" value="SDF"/>
    <property type="match status" value="1"/>
</dbReference>
<dbReference type="PRINTS" id="PR00173">
    <property type="entry name" value="EDTRNSPORT"/>
</dbReference>
<dbReference type="SUPFAM" id="SSF118215">
    <property type="entry name" value="Proton glutamate symport protein"/>
    <property type="match status" value="1"/>
</dbReference>
<dbReference type="PROSITE" id="PS00713">
    <property type="entry name" value="NA_DICARBOXYL_SYMP_1"/>
    <property type="match status" value="1"/>
</dbReference>
<dbReference type="PROSITE" id="PS00714">
    <property type="entry name" value="NA_DICARBOXYL_SYMP_2"/>
    <property type="match status" value="1"/>
</dbReference>
<accession>Q98AV2</accession>
<sequence length="477" mass="49646">MLTPLAPSVKRAPRKTLFAKPYVQVLVAILLGVAVGHFYPQIGENLKPLGDAFIKLVKMIIAPVIFLTVSTGIAGMSDLQKVGRVAGKAMVYFVTFSTLALIVGLIVGNVIQPGAGLNIDLTSLDVQAVNGYASKAHEQSVTGFLMNMIPTTIVGAFVEGDILQVLFFSVLFGIALAMVGESGKSVLSFLQDLTAPVFKLVGILMKAAPIGAFGAMAFTIGKYGIGSVANLAMLVGTFYLTAFLFVFGVLGAVCRYNGFSIFSLIRYIKEELLLVLGTSSSEAALPSLMEKMEKAGAKRSVVGLVIPTGYSFNLDGTNIYMTLAALFIAQATNTDLSVGDQVLLLLVAMLSSKGAAGVTGAGFVTLAATLSVVPAVPVAGMALILGVDRFMSECRALTNLVGNAVASLVVARWEGELDQAQLKAAFCGHQPAETSAGQPLITPAPSNSAASLPVESPGWSQTPDDRAAGSKQTLAGR</sequence>
<evidence type="ECO:0000250" key="1"/>
<evidence type="ECO:0000255" key="2"/>
<evidence type="ECO:0000256" key="3">
    <source>
        <dbReference type="SAM" id="MobiDB-lite"/>
    </source>
</evidence>
<evidence type="ECO:0000305" key="4"/>
<protein>
    <recommendedName>
        <fullName>C4-dicarboxylate transport protein 1</fullName>
    </recommendedName>
</protein>
<name>DCTA1_RHILO</name>
<proteinExistence type="inferred from homology"/>